<protein>
    <recommendedName>
        <fullName>Putative ribose uptake protein RbsU</fullName>
    </recommendedName>
</protein>
<name>RBSU_STAEQ</name>
<reference key="1">
    <citation type="journal article" date="2005" name="J. Bacteriol.">
        <title>Insights on evolution of virulence and resistance from the complete genome analysis of an early methicillin-resistant Staphylococcus aureus strain and a biofilm-producing methicillin-resistant Staphylococcus epidermidis strain.</title>
        <authorList>
            <person name="Gill S.R."/>
            <person name="Fouts D.E."/>
            <person name="Archer G.L."/>
            <person name="Mongodin E.F."/>
            <person name="DeBoy R.T."/>
            <person name="Ravel J."/>
            <person name="Paulsen I.T."/>
            <person name="Kolonay J.F."/>
            <person name="Brinkac L.M."/>
            <person name="Beanan M.J."/>
            <person name="Dodson R.J."/>
            <person name="Daugherty S.C."/>
            <person name="Madupu R."/>
            <person name="Angiuoli S.V."/>
            <person name="Durkin A.S."/>
            <person name="Haft D.H."/>
            <person name="Vamathevan J.J."/>
            <person name="Khouri H."/>
            <person name="Utterback T.R."/>
            <person name="Lee C."/>
            <person name="Dimitrov G."/>
            <person name="Jiang L."/>
            <person name="Qin H."/>
            <person name="Weidman J."/>
            <person name="Tran K."/>
            <person name="Kang K.H."/>
            <person name="Hance I.R."/>
            <person name="Nelson K.E."/>
            <person name="Fraser C.M."/>
        </authorList>
    </citation>
    <scope>NUCLEOTIDE SEQUENCE [LARGE SCALE GENOMIC DNA]</scope>
    <source>
        <strain>ATCC 35984 / DSM 28319 / BCRC 17069 / CCUG 31568 / BM 3577 / RP62A</strain>
    </source>
</reference>
<comment type="function">
    <text evidence="1">Could be involved in the uptake of ribose.</text>
</comment>
<comment type="subcellular location">
    <subcellularLocation>
        <location evidence="3">Cell membrane</location>
        <topology evidence="3">Multi-pass membrane protein</topology>
    </subcellularLocation>
</comment>
<comment type="similarity">
    <text evidence="3">Belongs to the GRP transporter (TC 2.A.7.5) family.</text>
</comment>
<gene>
    <name type="primary">rbsU</name>
    <name type="ordered locus">SERP2102</name>
</gene>
<accession>Q5HL85</accession>
<feature type="chain" id="PRO_0000213644" description="Putative ribose uptake protein RbsU">
    <location>
        <begin position="1"/>
        <end position="293"/>
    </location>
</feature>
<feature type="transmembrane region" description="Helical" evidence="2">
    <location>
        <begin position="5"/>
        <end position="24"/>
    </location>
</feature>
<feature type="transmembrane region" description="Helical" evidence="2">
    <location>
        <begin position="34"/>
        <end position="51"/>
    </location>
</feature>
<feature type="transmembrane region" description="Helical" evidence="2">
    <location>
        <begin position="58"/>
        <end position="80"/>
    </location>
</feature>
<feature type="transmembrane region" description="Helical" evidence="2">
    <location>
        <begin position="95"/>
        <end position="114"/>
    </location>
</feature>
<feature type="transmembrane region" description="Helical" evidence="2">
    <location>
        <begin position="121"/>
        <end position="138"/>
    </location>
</feature>
<feature type="transmembrane region" description="Helical" evidence="2">
    <location>
        <begin position="153"/>
        <end position="170"/>
    </location>
</feature>
<feature type="transmembrane region" description="Helical" evidence="2">
    <location>
        <begin position="177"/>
        <end position="199"/>
    </location>
</feature>
<feature type="transmembrane region" description="Helical" evidence="2">
    <location>
        <begin position="212"/>
        <end position="234"/>
    </location>
</feature>
<feature type="transmembrane region" description="Helical" evidence="2">
    <location>
        <begin position="241"/>
        <end position="263"/>
    </location>
</feature>
<feature type="transmembrane region" description="Helical" evidence="2">
    <location>
        <begin position="273"/>
        <end position="292"/>
    </location>
</feature>
<sequence length="293" mass="31262">MDFIAILIGLGPLLGWGLFPTIASKFGGRPVNQIFGATVGTLIFAIVLALFKGIGLPGGMALVFSLISGAGWAFGQIITFKAFELVGSSRAMPITTAFQLLGASLWGVFALGNWPGITNKIIGFLALLVILIGARMTVWTETKQQEYSKNLRSAVILLLVGEIGYWIYSAAPQATDIGGFKAFLPQAIGMVIVAVIYALMNMSKGNAFKEKVSWQQTISGFFFAFAALTYLISAQPNMNGLATGFVLSQTSVVLATLTGIFFLNQKKTSKELMITIVGLVLILVAASITVFIK</sequence>
<dbReference type="EMBL" id="CP000029">
    <property type="protein sequence ID" value="AAW52972.1"/>
    <property type="molecule type" value="Genomic_DNA"/>
</dbReference>
<dbReference type="RefSeq" id="WP_002484494.1">
    <property type="nucleotide sequence ID" value="NC_002976.3"/>
</dbReference>
<dbReference type="SMR" id="Q5HL85"/>
<dbReference type="STRING" id="176279.SERP2102"/>
<dbReference type="KEGG" id="ser:SERP2102"/>
<dbReference type="eggNOG" id="COG4975">
    <property type="taxonomic scope" value="Bacteria"/>
</dbReference>
<dbReference type="HOGENOM" id="CLU_076024_0_1_9"/>
<dbReference type="Proteomes" id="UP000000531">
    <property type="component" value="Chromosome"/>
</dbReference>
<dbReference type="GO" id="GO:0005886">
    <property type="term" value="C:plasma membrane"/>
    <property type="evidence" value="ECO:0007669"/>
    <property type="project" value="UniProtKB-SubCell"/>
</dbReference>
<dbReference type="GO" id="GO:0015144">
    <property type="term" value="F:carbohydrate transmembrane transporter activity"/>
    <property type="evidence" value="ECO:0007669"/>
    <property type="project" value="InterPro"/>
</dbReference>
<dbReference type="CDD" id="cd23111">
    <property type="entry name" value="ribose_uptake_RbsU"/>
    <property type="match status" value="1"/>
</dbReference>
<dbReference type="InterPro" id="IPR010651">
    <property type="entry name" value="Sugar_transport"/>
</dbReference>
<dbReference type="NCBIfam" id="NF047342">
    <property type="entry name" value="symport_RbsU"/>
    <property type="match status" value="1"/>
</dbReference>
<dbReference type="PANTHER" id="PTHR16119">
    <property type="entry name" value="TRANSMEMBRANE PROTEIN 144"/>
    <property type="match status" value="1"/>
</dbReference>
<dbReference type="PANTHER" id="PTHR16119:SF17">
    <property type="entry name" value="TRANSMEMBRANE PROTEIN 144"/>
    <property type="match status" value="1"/>
</dbReference>
<dbReference type="Pfam" id="PF06800">
    <property type="entry name" value="Sugar_transport"/>
    <property type="match status" value="1"/>
</dbReference>
<organism>
    <name type="scientific">Staphylococcus epidermidis (strain ATCC 35984 / DSM 28319 / BCRC 17069 / CCUG 31568 / BM 3577 / RP62A)</name>
    <dbReference type="NCBI Taxonomy" id="176279"/>
    <lineage>
        <taxon>Bacteria</taxon>
        <taxon>Bacillati</taxon>
        <taxon>Bacillota</taxon>
        <taxon>Bacilli</taxon>
        <taxon>Bacillales</taxon>
        <taxon>Staphylococcaceae</taxon>
        <taxon>Staphylococcus</taxon>
    </lineage>
</organism>
<keyword id="KW-1003">Cell membrane</keyword>
<keyword id="KW-0472">Membrane</keyword>
<keyword id="KW-1185">Reference proteome</keyword>
<keyword id="KW-0762">Sugar transport</keyword>
<keyword id="KW-0812">Transmembrane</keyword>
<keyword id="KW-1133">Transmembrane helix</keyword>
<keyword id="KW-0813">Transport</keyword>
<proteinExistence type="inferred from homology"/>
<evidence type="ECO:0000250" key="1"/>
<evidence type="ECO:0000255" key="2"/>
<evidence type="ECO:0000305" key="3"/>